<dbReference type="EMBL" id="CR925677">
    <property type="protein sequence ID" value="CAI27859.1"/>
    <property type="molecule type" value="Genomic_DNA"/>
</dbReference>
<dbReference type="RefSeq" id="WP_011255543.1">
    <property type="nucleotide sequence ID" value="NC_006831.1"/>
</dbReference>
<dbReference type="SMR" id="Q5FH34"/>
<dbReference type="KEGG" id="erg:ERGA_CDS_04070"/>
<dbReference type="HOGENOM" id="CLU_050669_4_0_5"/>
<dbReference type="OrthoDB" id="9812769at2"/>
<dbReference type="Proteomes" id="UP000000533">
    <property type="component" value="Chromosome"/>
</dbReference>
<dbReference type="GO" id="GO:0005886">
    <property type="term" value="C:plasma membrane"/>
    <property type="evidence" value="ECO:0007669"/>
    <property type="project" value="UniProtKB-SubCell"/>
</dbReference>
<dbReference type="GO" id="GO:0045259">
    <property type="term" value="C:proton-transporting ATP synthase complex"/>
    <property type="evidence" value="ECO:0007669"/>
    <property type="project" value="UniProtKB-KW"/>
</dbReference>
<dbReference type="GO" id="GO:0005524">
    <property type="term" value="F:ATP binding"/>
    <property type="evidence" value="ECO:0007669"/>
    <property type="project" value="UniProtKB-UniRule"/>
</dbReference>
<dbReference type="GO" id="GO:0046933">
    <property type="term" value="F:proton-transporting ATP synthase activity, rotational mechanism"/>
    <property type="evidence" value="ECO:0007669"/>
    <property type="project" value="UniProtKB-UniRule"/>
</dbReference>
<dbReference type="GO" id="GO:0042777">
    <property type="term" value="P:proton motive force-driven plasma membrane ATP synthesis"/>
    <property type="evidence" value="ECO:0007669"/>
    <property type="project" value="UniProtKB-UniRule"/>
</dbReference>
<dbReference type="CDD" id="cd12151">
    <property type="entry name" value="F1-ATPase_gamma"/>
    <property type="match status" value="1"/>
</dbReference>
<dbReference type="Gene3D" id="3.40.1380.10">
    <property type="match status" value="1"/>
</dbReference>
<dbReference type="Gene3D" id="1.10.287.80">
    <property type="entry name" value="ATP synthase, gamma subunit, helix hairpin domain"/>
    <property type="match status" value="1"/>
</dbReference>
<dbReference type="HAMAP" id="MF_00815">
    <property type="entry name" value="ATP_synth_gamma_bact"/>
    <property type="match status" value="1"/>
</dbReference>
<dbReference type="InterPro" id="IPR035968">
    <property type="entry name" value="ATP_synth_F1_ATPase_gsu"/>
</dbReference>
<dbReference type="InterPro" id="IPR000131">
    <property type="entry name" value="ATP_synth_F1_gsu"/>
</dbReference>
<dbReference type="NCBIfam" id="TIGR01146">
    <property type="entry name" value="ATPsyn_F1gamma"/>
    <property type="match status" value="1"/>
</dbReference>
<dbReference type="PANTHER" id="PTHR11693">
    <property type="entry name" value="ATP SYNTHASE GAMMA CHAIN"/>
    <property type="match status" value="1"/>
</dbReference>
<dbReference type="PANTHER" id="PTHR11693:SF22">
    <property type="entry name" value="ATP SYNTHASE SUBUNIT GAMMA, MITOCHONDRIAL"/>
    <property type="match status" value="1"/>
</dbReference>
<dbReference type="Pfam" id="PF00231">
    <property type="entry name" value="ATP-synt"/>
    <property type="match status" value="1"/>
</dbReference>
<dbReference type="PRINTS" id="PR00126">
    <property type="entry name" value="ATPASEGAMMA"/>
</dbReference>
<dbReference type="SUPFAM" id="SSF52943">
    <property type="entry name" value="ATP synthase (F1-ATPase), gamma subunit"/>
    <property type="match status" value="1"/>
</dbReference>
<sequence>MANLKALFLRMKSVKSIQKTTKVMQMISAAKLRQVQQRLNNARMHMLELSKIIDTNVVSKNNECTDRHNKKDILLVIMSSDRGLCGNFNNMIVKFAKSYIEELESCGKNVKLLFFGKVAYNMMCSQYSSKILDVFSNIQSITDFLSFKLFLYGSGVDFNQFIDVMVLFNKFYTTILQKPTVEQLMPCNIDISVSLKEYYKYEPAYLNVLSTMSLSYILNLMYIAFLENCASEHSSRVIAMESANNNTKEMLSKLVLQYNRSRQAAITTDLIEVISGFESLGNQ</sequence>
<proteinExistence type="inferred from homology"/>
<accession>Q5FH34</accession>
<reference key="1">
    <citation type="journal article" date="2006" name="J. Bacteriol.">
        <title>Comparative genomic analysis of three strains of Ehrlichia ruminantium reveals an active process of genome size plasticity.</title>
        <authorList>
            <person name="Frutos R."/>
            <person name="Viari A."/>
            <person name="Ferraz C."/>
            <person name="Morgat A."/>
            <person name="Eychenie S."/>
            <person name="Kandassamy Y."/>
            <person name="Chantal I."/>
            <person name="Bensaid A."/>
            <person name="Coissac E."/>
            <person name="Vachiery N."/>
            <person name="Demaille J."/>
            <person name="Martinez D."/>
        </authorList>
    </citation>
    <scope>NUCLEOTIDE SEQUENCE [LARGE SCALE GENOMIC DNA]</scope>
    <source>
        <strain>Gardel</strain>
    </source>
</reference>
<keyword id="KW-0066">ATP synthesis</keyword>
<keyword id="KW-0997">Cell inner membrane</keyword>
<keyword id="KW-1003">Cell membrane</keyword>
<keyword id="KW-0139">CF(1)</keyword>
<keyword id="KW-0375">Hydrogen ion transport</keyword>
<keyword id="KW-0406">Ion transport</keyword>
<keyword id="KW-0472">Membrane</keyword>
<keyword id="KW-0813">Transport</keyword>
<feature type="chain" id="PRO_1000053208" description="ATP synthase gamma chain">
    <location>
        <begin position="1"/>
        <end position="283"/>
    </location>
</feature>
<evidence type="ECO:0000255" key="1">
    <source>
        <dbReference type="HAMAP-Rule" id="MF_00815"/>
    </source>
</evidence>
<comment type="function">
    <text evidence="1">Produces ATP from ADP in the presence of a proton gradient across the membrane. The gamma chain is believed to be important in regulating ATPase activity and the flow of protons through the CF(0) complex.</text>
</comment>
<comment type="subunit">
    <text evidence="1">F-type ATPases have 2 components, CF(1) - the catalytic core - and CF(0) - the membrane proton channel. CF(1) has five subunits: alpha(3), beta(3), gamma(1), delta(1), epsilon(1). CF(0) has three main subunits: a, b and c.</text>
</comment>
<comment type="subcellular location">
    <subcellularLocation>
        <location evidence="1">Cell inner membrane</location>
        <topology evidence="1">Peripheral membrane protein</topology>
    </subcellularLocation>
</comment>
<comment type="similarity">
    <text evidence="1">Belongs to the ATPase gamma chain family.</text>
</comment>
<protein>
    <recommendedName>
        <fullName evidence="1">ATP synthase gamma chain</fullName>
    </recommendedName>
    <alternativeName>
        <fullName evidence="1">ATP synthase F1 sector gamma subunit</fullName>
    </alternativeName>
    <alternativeName>
        <fullName evidence="1">F-ATPase gamma subunit</fullName>
    </alternativeName>
</protein>
<gene>
    <name evidence="1" type="primary">atpG</name>
    <name type="ordered locus">ERGA_CDS_04070</name>
</gene>
<name>ATPG_EHRRG</name>
<organism>
    <name type="scientific">Ehrlichia ruminantium (strain Gardel)</name>
    <dbReference type="NCBI Taxonomy" id="302409"/>
    <lineage>
        <taxon>Bacteria</taxon>
        <taxon>Pseudomonadati</taxon>
        <taxon>Pseudomonadota</taxon>
        <taxon>Alphaproteobacteria</taxon>
        <taxon>Rickettsiales</taxon>
        <taxon>Anaplasmataceae</taxon>
        <taxon>Ehrlichia</taxon>
    </lineage>
</organism>